<proteinExistence type="evidence at protein level"/>
<comment type="function">
    <text evidence="2">Substrate-binding subunit of tRNA (adenine-N(1)-)-methyltransferase, which catalyzes the formation of N(1)-methyladenine at position 58 (m1A58) in initiator methionyl-tRNA. Together with the TRMT61A catalytic subunit, part of a mRNA N(1)-methyltransferase complex that mediates methylation of adenosine residues at the N(1) position of a small subset of mRNAs: N(1) methylation takes place in tRNA T-loop-like structures of mRNAs and is only present at low stoichiometries.</text>
</comment>
<comment type="subunit">
    <text evidence="2">Heterotetramer; composed of two copies of TRMT6 and two copies of TRMT61A.</text>
</comment>
<comment type="subcellular location">
    <subcellularLocation>
        <location evidence="1">Nucleus</location>
    </subcellularLocation>
</comment>
<comment type="alternative products">
    <event type="alternative splicing"/>
    <isoform>
        <id>Q8CE96-1</id>
        <name>1</name>
        <sequence type="displayed"/>
    </isoform>
    <isoform>
        <id>Q8CE96-3</id>
        <name>3</name>
        <sequence type="described" ref="VSP_018026"/>
    </isoform>
    <isoform>
        <id>Q8CE96-4</id>
        <name>4</name>
        <sequence type="described" ref="VSP_018026 VSP_018027 VSP_018028"/>
    </isoform>
</comment>
<comment type="similarity">
    <text evidence="6">Belongs to the TRM6/GCD10 family.</text>
</comment>
<comment type="sequence caution" evidence="6">
    <conflict type="erroneous initiation">
        <sequence resource="EMBL-CDS" id="BAC98110"/>
    </conflict>
    <text>Extended N-terminus.</text>
</comment>
<comment type="sequence caution" evidence="6">
    <conflict type="frameshift">
        <sequence resource="EMBL-CDS" id="BAC98110"/>
    </conflict>
</comment>
<dbReference type="EMBL" id="AK129300">
    <property type="protein sequence ID" value="BAC98110.1"/>
    <property type="status" value="ALT_SEQ"/>
    <property type="molecule type" value="mRNA"/>
</dbReference>
<dbReference type="EMBL" id="AK014359">
    <property type="protein sequence ID" value="BAC25432.1"/>
    <property type="molecule type" value="mRNA"/>
</dbReference>
<dbReference type="EMBL" id="AK165976">
    <property type="protein sequence ID" value="BAE38495.1"/>
    <property type="molecule type" value="mRNA"/>
</dbReference>
<dbReference type="EMBL" id="AK167222">
    <property type="protein sequence ID" value="BAE39347.1"/>
    <property type="molecule type" value="mRNA"/>
</dbReference>
<dbReference type="EMBL" id="AK028755">
    <property type="protein sequence ID" value="BAC26100.1"/>
    <property type="molecule type" value="mRNA"/>
</dbReference>
<dbReference type="EMBL" id="BC049083">
    <property type="protein sequence ID" value="AAH49083.1"/>
    <property type="molecule type" value="mRNA"/>
</dbReference>
<dbReference type="EMBL" id="BC052648">
    <property type="protein sequence ID" value="AAH52648.1"/>
    <property type="molecule type" value="mRNA"/>
</dbReference>
<dbReference type="CCDS" id="CCDS50728.1">
    <molecule id="Q8CE96-1"/>
</dbReference>
<dbReference type="RefSeq" id="NP_001343373.1">
    <molecule id="Q8CE96-3"/>
    <property type="nucleotide sequence ID" value="NM_001356444.1"/>
</dbReference>
<dbReference type="RefSeq" id="NP_780322.2">
    <molecule id="Q8CE96-1"/>
    <property type="nucleotide sequence ID" value="NM_175113.3"/>
</dbReference>
<dbReference type="RefSeq" id="XP_006500115.1">
    <property type="nucleotide sequence ID" value="XM_006500052.2"/>
</dbReference>
<dbReference type="RefSeq" id="XP_030107832.1">
    <molecule id="Q8CE96-3"/>
    <property type="nucleotide sequence ID" value="XM_030251972.1"/>
</dbReference>
<dbReference type="RefSeq" id="XP_036018394.1">
    <molecule id="Q8CE96-1"/>
    <property type="nucleotide sequence ID" value="XM_036162501.1"/>
</dbReference>
<dbReference type="RefSeq" id="XP_036018395.1">
    <molecule id="Q8CE96-3"/>
    <property type="nucleotide sequence ID" value="XM_036162502.1"/>
</dbReference>
<dbReference type="SMR" id="Q8CE96"/>
<dbReference type="BioGRID" id="211814">
    <property type="interactions" value="10"/>
</dbReference>
<dbReference type="FunCoup" id="Q8CE96">
    <property type="interactions" value="2825"/>
</dbReference>
<dbReference type="STRING" id="10090.ENSMUSP00000044687"/>
<dbReference type="iPTMnet" id="Q8CE96"/>
<dbReference type="PhosphoSitePlus" id="Q8CE96"/>
<dbReference type="SwissPalm" id="Q8CE96"/>
<dbReference type="PaxDb" id="10090-ENSMUSP00000044687"/>
<dbReference type="PeptideAtlas" id="Q8CE96"/>
<dbReference type="ProteomicsDB" id="258851">
    <molecule id="Q8CE96-1"/>
</dbReference>
<dbReference type="ProteomicsDB" id="258852">
    <molecule id="Q8CE96-3"/>
</dbReference>
<dbReference type="ProteomicsDB" id="258853">
    <molecule id="Q8CE96-4"/>
</dbReference>
<dbReference type="Pumba" id="Q8CE96"/>
<dbReference type="Antibodypedia" id="23943">
    <property type="antibodies" value="86 antibodies from 20 providers"/>
</dbReference>
<dbReference type="DNASU" id="66926"/>
<dbReference type="Ensembl" id="ENSMUST00000039554.7">
    <molecule id="Q8CE96-1"/>
    <property type="protein sequence ID" value="ENSMUSP00000044687.7"/>
    <property type="gene ID" value="ENSMUSG00000037376.15"/>
</dbReference>
<dbReference type="GeneID" id="66926"/>
<dbReference type="KEGG" id="mmu:66926"/>
<dbReference type="UCSC" id="uc008mng.1">
    <molecule id="Q8CE96-1"/>
    <property type="organism name" value="mouse"/>
</dbReference>
<dbReference type="AGR" id="MGI:1914176"/>
<dbReference type="CTD" id="51605"/>
<dbReference type="MGI" id="MGI:1914176">
    <property type="gene designation" value="Trmt6"/>
</dbReference>
<dbReference type="VEuPathDB" id="HostDB:ENSMUSG00000037376"/>
<dbReference type="eggNOG" id="KOG1416">
    <property type="taxonomic scope" value="Eukaryota"/>
</dbReference>
<dbReference type="GeneTree" id="ENSGT00390000008327"/>
<dbReference type="HOGENOM" id="CLU_010916_0_1_1"/>
<dbReference type="InParanoid" id="Q8CE96"/>
<dbReference type="OMA" id="TRCRPYQ"/>
<dbReference type="OrthoDB" id="10254665at2759"/>
<dbReference type="PhylomeDB" id="Q8CE96"/>
<dbReference type="TreeFam" id="TF314835"/>
<dbReference type="BioGRID-ORCS" id="66926">
    <property type="hits" value="30 hits in 80 CRISPR screens"/>
</dbReference>
<dbReference type="ChiTaRS" id="Trmt6">
    <property type="organism name" value="mouse"/>
</dbReference>
<dbReference type="PRO" id="PR:Q8CE96"/>
<dbReference type="Proteomes" id="UP000000589">
    <property type="component" value="Chromosome 2"/>
</dbReference>
<dbReference type="RNAct" id="Q8CE96">
    <property type="molecule type" value="protein"/>
</dbReference>
<dbReference type="Bgee" id="ENSMUSG00000037376">
    <property type="expression patterns" value="Expressed in metanephric ureteric bud and 236 other cell types or tissues"/>
</dbReference>
<dbReference type="GO" id="GO:0005634">
    <property type="term" value="C:nucleus"/>
    <property type="evidence" value="ECO:0007669"/>
    <property type="project" value="UniProtKB-SubCell"/>
</dbReference>
<dbReference type="GO" id="GO:0031515">
    <property type="term" value="C:tRNA (m1A) methyltransferase complex"/>
    <property type="evidence" value="ECO:0007669"/>
    <property type="project" value="Ensembl"/>
</dbReference>
<dbReference type="GO" id="GO:0006397">
    <property type="term" value="P:mRNA processing"/>
    <property type="evidence" value="ECO:0000250"/>
    <property type="project" value="UniProtKB"/>
</dbReference>
<dbReference type="GO" id="GO:0030488">
    <property type="term" value="P:tRNA methylation"/>
    <property type="evidence" value="ECO:0007669"/>
    <property type="project" value="InterPro"/>
</dbReference>
<dbReference type="InterPro" id="IPR017423">
    <property type="entry name" value="TRM6"/>
</dbReference>
<dbReference type="PANTHER" id="PTHR12945">
    <property type="entry name" value="TRANSLATION INITIATION FACTOR EIF3-RELATED"/>
    <property type="match status" value="1"/>
</dbReference>
<dbReference type="PANTHER" id="PTHR12945:SF0">
    <property type="entry name" value="TRNA (ADENINE(58)-N(1))-METHYLTRANSFERASE NON-CATALYTIC SUBUNIT TRM6"/>
    <property type="match status" value="1"/>
</dbReference>
<dbReference type="Pfam" id="PF04189">
    <property type="entry name" value="Gcd10p"/>
    <property type="match status" value="1"/>
</dbReference>
<dbReference type="PIRSF" id="PIRSF038170">
    <property type="entry name" value="tRNA_m1A_mtfrase"/>
    <property type="match status" value="1"/>
</dbReference>
<reference key="1">
    <citation type="journal article" date="2003" name="DNA Res.">
        <title>Prediction of the coding sequences of mouse homologues of KIAA gene: III. The complete nucleotide sequences of 500 mouse KIAA-homologous cDNAs identified by screening of terminal sequences of cDNA clones randomly sampled from size-fractionated libraries.</title>
        <authorList>
            <person name="Okazaki N."/>
            <person name="Kikuno R."/>
            <person name="Ohara R."/>
            <person name="Inamoto S."/>
            <person name="Koseki H."/>
            <person name="Hiraoka S."/>
            <person name="Saga Y."/>
            <person name="Nagase T."/>
            <person name="Ohara O."/>
            <person name="Koga H."/>
        </authorList>
    </citation>
    <scope>NUCLEOTIDE SEQUENCE [LARGE SCALE MRNA] (ISOFORM 1)</scope>
    <source>
        <tissue>Embryo</tissue>
    </source>
</reference>
<reference key="2">
    <citation type="journal article" date="2005" name="Science">
        <title>The transcriptional landscape of the mammalian genome.</title>
        <authorList>
            <person name="Carninci P."/>
            <person name="Kasukawa T."/>
            <person name="Katayama S."/>
            <person name="Gough J."/>
            <person name="Frith M.C."/>
            <person name="Maeda N."/>
            <person name="Oyama R."/>
            <person name="Ravasi T."/>
            <person name="Lenhard B."/>
            <person name="Wells C."/>
            <person name="Kodzius R."/>
            <person name="Shimokawa K."/>
            <person name="Bajic V.B."/>
            <person name="Brenner S.E."/>
            <person name="Batalov S."/>
            <person name="Forrest A.R."/>
            <person name="Zavolan M."/>
            <person name="Davis M.J."/>
            <person name="Wilming L.G."/>
            <person name="Aidinis V."/>
            <person name="Allen J.E."/>
            <person name="Ambesi-Impiombato A."/>
            <person name="Apweiler R."/>
            <person name="Aturaliya R.N."/>
            <person name="Bailey T.L."/>
            <person name="Bansal M."/>
            <person name="Baxter L."/>
            <person name="Beisel K.W."/>
            <person name="Bersano T."/>
            <person name="Bono H."/>
            <person name="Chalk A.M."/>
            <person name="Chiu K.P."/>
            <person name="Choudhary V."/>
            <person name="Christoffels A."/>
            <person name="Clutterbuck D.R."/>
            <person name="Crowe M.L."/>
            <person name="Dalla E."/>
            <person name="Dalrymple B.P."/>
            <person name="de Bono B."/>
            <person name="Della Gatta G."/>
            <person name="di Bernardo D."/>
            <person name="Down T."/>
            <person name="Engstrom P."/>
            <person name="Fagiolini M."/>
            <person name="Faulkner G."/>
            <person name="Fletcher C.F."/>
            <person name="Fukushima T."/>
            <person name="Furuno M."/>
            <person name="Futaki S."/>
            <person name="Gariboldi M."/>
            <person name="Georgii-Hemming P."/>
            <person name="Gingeras T.R."/>
            <person name="Gojobori T."/>
            <person name="Green R.E."/>
            <person name="Gustincich S."/>
            <person name="Harbers M."/>
            <person name="Hayashi Y."/>
            <person name="Hensch T.K."/>
            <person name="Hirokawa N."/>
            <person name="Hill D."/>
            <person name="Huminiecki L."/>
            <person name="Iacono M."/>
            <person name="Ikeo K."/>
            <person name="Iwama A."/>
            <person name="Ishikawa T."/>
            <person name="Jakt M."/>
            <person name="Kanapin A."/>
            <person name="Katoh M."/>
            <person name="Kawasawa Y."/>
            <person name="Kelso J."/>
            <person name="Kitamura H."/>
            <person name="Kitano H."/>
            <person name="Kollias G."/>
            <person name="Krishnan S.P."/>
            <person name="Kruger A."/>
            <person name="Kummerfeld S.K."/>
            <person name="Kurochkin I.V."/>
            <person name="Lareau L.F."/>
            <person name="Lazarevic D."/>
            <person name="Lipovich L."/>
            <person name="Liu J."/>
            <person name="Liuni S."/>
            <person name="McWilliam S."/>
            <person name="Madan Babu M."/>
            <person name="Madera M."/>
            <person name="Marchionni L."/>
            <person name="Matsuda H."/>
            <person name="Matsuzawa S."/>
            <person name="Miki H."/>
            <person name="Mignone F."/>
            <person name="Miyake S."/>
            <person name="Morris K."/>
            <person name="Mottagui-Tabar S."/>
            <person name="Mulder N."/>
            <person name="Nakano N."/>
            <person name="Nakauchi H."/>
            <person name="Ng P."/>
            <person name="Nilsson R."/>
            <person name="Nishiguchi S."/>
            <person name="Nishikawa S."/>
            <person name="Nori F."/>
            <person name="Ohara O."/>
            <person name="Okazaki Y."/>
            <person name="Orlando V."/>
            <person name="Pang K.C."/>
            <person name="Pavan W.J."/>
            <person name="Pavesi G."/>
            <person name="Pesole G."/>
            <person name="Petrovsky N."/>
            <person name="Piazza S."/>
            <person name="Reed J."/>
            <person name="Reid J.F."/>
            <person name="Ring B.Z."/>
            <person name="Ringwald M."/>
            <person name="Rost B."/>
            <person name="Ruan Y."/>
            <person name="Salzberg S.L."/>
            <person name="Sandelin A."/>
            <person name="Schneider C."/>
            <person name="Schoenbach C."/>
            <person name="Sekiguchi K."/>
            <person name="Semple C.A."/>
            <person name="Seno S."/>
            <person name="Sessa L."/>
            <person name="Sheng Y."/>
            <person name="Shibata Y."/>
            <person name="Shimada H."/>
            <person name="Shimada K."/>
            <person name="Silva D."/>
            <person name="Sinclair B."/>
            <person name="Sperling S."/>
            <person name="Stupka E."/>
            <person name="Sugiura K."/>
            <person name="Sultana R."/>
            <person name="Takenaka Y."/>
            <person name="Taki K."/>
            <person name="Tammoja K."/>
            <person name="Tan S.L."/>
            <person name="Tang S."/>
            <person name="Taylor M.S."/>
            <person name="Tegner J."/>
            <person name="Teichmann S.A."/>
            <person name="Ueda H.R."/>
            <person name="van Nimwegen E."/>
            <person name="Verardo R."/>
            <person name="Wei C.L."/>
            <person name="Yagi K."/>
            <person name="Yamanishi H."/>
            <person name="Zabarovsky E."/>
            <person name="Zhu S."/>
            <person name="Zimmer A."/>
            <person name="Hide W."/>
            <person name="Bult C."/>
            <person name="Grimmond S.M."/>
            <person name="Teasdale R.D."/>
            <person name="Liu E.T."/>
            <person name="Brusic V."/>
            <person name="Quackenbush J."/>
            <person name="Wahlestedt C."/>
            <person name="Mattick J.S."/>
            <person name="Hume D.A."/>
            <person name="Kai C."/>
            <person name="Sasaki D."/>
            <person name="Tomaru Y."/>
            <person name="Fukuda S."/>
            <person name="Kanamori-Katayama M."/>
            <person name="Suzuki M."/>
            <person name="Aoki J."/>
            <person name="Arakawa T."/>
            <person name="Iida J."/>
            <person name="Imamura K."/>
            <person name="Itoh M."/>
            <person name="Kato T."/>
            <person name="Kawaji H."/>
            <person name="Kawagashira N."/>
            <person name="Kawashima T."/>
            <person name="Kojima M."/>
            <person name="Kondo S."/>
            <person name="Konno H."/>
            <person name="Nakano K."/>
            <person name="Ninomiya N."/>
            <person name="Nishio T."/>
            <person name="Okada M."/>
            <person name="Plessy C."/>
            <person name="Shibata K."/>
            <person name="Shiraki T."/>
            <person name="Suzuki S."/>
            <person name="Tagami M."/>
            <person name="Waki K."/>
            <person name="Watahiki A."/>
            <person name="Okamura-Oho Y."/>
            <person name="Suzuki H."/>
            <person name="Kawai J."/>
            <person name="Hayashizaki Y."/>
        </authorList>
    </citation>
    <scope>NUCLEOTIDE SEQUENCE [LARGE SCALE MRNA] (ISOFORMS 1 AND 3)</scope>
    <source>
        <strain>C57BL/6J</strain>
        <tissue>Head</tissue>
        <tissue>Skin</tissue>
    </source>
</reference>
<reference key="3">
    <citation type="journal article" date="2004" name="Genome Res.">
        <title>The status, quality, and expansion of the NIH full-length cDNA project: the Mammalian Gene Collection (MGC).</title>
        <authorList>
            <consortium name="The MGC Project Team"/>
        </authorList>
    </citation>
    <scope>NUCLEOTIDE SEQUENCE [LARGE SCALE MRNA] (ISOFORMS 1 AND 4)</scope>
    <source>
        <strain>C57BL/6J</strain>
        <tissue>Blastocyst</tissue>
    </source>
</reference>
<reference key="4">
    <citation type="journal article" date="2007" name="Science">
        <title>ATM and ATR substrate analysis reveals extensive protein networks responsive to DNA damage.</title>
        <authorList>
            <person name="Matsuoka S."/>
            <person name="Ballif B.A."/>
            <person name="Smogorzewska A."/>
            <person name="McDonald E.R. III"/>
            <person name="Hurov K.E."/>
            <person name="Luo J."/>
            <person name="Bakalarski C.E."/>
            <person name="Zhao Z."/>
            <person name="Solimini N."/>
            <person name="Lerenthal Y."/>
            <person name="Shiloh Y."/>
            <person name="Gygi S.P."/>
            <person name="Elledge S.J."/>
        </authorList>
    </citation>
    <scope>PHOSPHORYLATION [LARGE SCALE ANALYSIS] AT THR-108</scope>
    <scope>IDENTIFICATION BY MASS SPECTROMETRY [LARGE SCALE ANALYSIS]</scope>
    <source>
        <tissue>Embryonic fibroblast</tissue>
    </source>
</reference>
<reference key="5">
    <citation type="journal article" date="2010" name="Cell">
        <title>A tissue-specific atlas of mouse protein phosphorylation and expression.</title>
        <authorList>
            <person name="Huttlin E.L."/>
            <person name="Jedrychowski M.P."/>
            <person name="Elias J.E."/>
            <person name="Goswami T."/>
            <person name="Rad R."/>
            <person name="Beausoleil S.A."/>
            <person name="Villen J."/>
            <person name="Haas W."/>
            <person name="Sowa M.E."/>
            <person name="Gygi S.P."/>
        </authorList>
    </citation>
    <scope>IDENTIFICATION BY MASS SPECTROMETRY [LARGE SCALE ANALYSIS]</scope>
    <source>
        <tissue>Pancreas</tissue>
        <tissue>Spleen</tissue>
        <tissue>Testis</tissue>
    </source>
</reference>
<organism>
    <name type="scientific">Mus musculus</name>
    <name type="common">Mouse</name>
    <dbReference type="NCBI Taxonomy" id="10090"/>
    <lineage>
        <taxon>Eukaryota</taxon>
        <taxon>Metazoa</taxon>
        <taxon>Chordata</taxon>
        <taxon>Craniata</taxon>
        <taxon>Vertebrata</taxon>
        <taxon>Euteleostomi</taxon>
        <taxon>Mammalia</taxon>
        <taxon>Eutheria</taxon>
        <taxon>Euarchontoglires</taxon>
        <taxon>Glires</taxon>
        <taxon>Rodentia</taxon>
        <taxon>Myomorpha</taxon>
        <taxon>Muroidea</taxon>
        <taxon>Muridae</taxon>
        <taxon>Murinae</taxon>
        <taxon>Mus</taxon>
        <taxon>Mus</taxon>
    </lineage>
</organism>
<protein>
    <recommendedName>
        <fullName>tRNA (adenine(58)-N(1))-methyltransferase non-catalytic subunit TRM6</fullName>
    </recommendedName>
    <alternativeName>
        <fullName evidence="2">mRNA methyladenosine-N(1)-methyltransferase non-catalytic subunit TRM6</fullName>
    </alternativeName>
    <alternativeName>
        <fullName>tRNA(m1A58)-methyltransferase subunit TRM6</fullName>
        <shortName>tRNA(m1A58)MTase subunit TRM6</shortName>
    </alternativeName>
</protein>
<gene>
    <name type="primary">Trmt6</name>
    <name type="synonym">Kiaa1153</name>
    <name type="synonym">Trm6</name>
</gene>
<feature type="chain" id="PRO_0000233099" description="tRNA (adenine(58)-N(1))-methyltransferase non-catalytic subunit TRM6">
    <location>
        <begin position="1"/>
        <end position="497"/>
    </location>
</feature>
<feature type="region of interest" description="Disordered" evidence="3">
    <location>
        <begin position="81"/>
        <end position="103"/>
    </location>
</feature>
<feature type="region of interest" description="Substrate" evidence="2">
    <location>
        <begin position="95"/>
        <end position="105"/>
    </location>
</feature>
<feature type="region of interest" description="Substrate" evidence="2">
    <location>
        <begin position="146"/>
        <end position="155"/>
    </location>
</feature>
<feature type="region of interest" description="Substrate" evidence="2">
    <location>
        <begin position="176"/>
        <end position="183"/>
    </location>
</feature>
<feature type="region of interest" description="Disordered" evidence="3">
    <location>
        <begin position="275"/>
        <end position="354"/>
    </location>
</feature>
<feature type="region of interest" description="Substrate" evidence="2">
    <location>
        <begin position="415"/>
        <end position="423"/>
    </location>
</feature>
<feature type="region of interest" description="Substrate" evidence="2">
    <location>
        <begin position="434"/>
        <end position="441"/>
    </location>
</feature>
<feature type="region of interest" description="Disordered" evidence="3">
    <location>
        <begin position="474"/>
        <end position="497"/>
    </location>
</feature>
<feature type="compositionally biased region" description="Acidic residues" evidence="3">
    <location>
        <begin position="289"/>
        <end position="307"/>
    </location>
</feature>
<feature type="compositionally biased region" description="Basic and acidic residues" evidence="3">
    <location>
        <begin position="328"/>
        <end position="354"/>
    </location>
</feature>
<feature type="compositionally biased region" description="Basic and acidic residues" evidence="3">
    <location>
        <begin position="478"/>
        <end position="487"/>
    </location>
</feature>
<feature type="binding site" evidence="2">
    <location>
        <position position="349"/>
    </location>
    <ligand>
        <name>substrate</name>
    </ligand>
</feature>
<feature type="binding site" evidence="2">
    <location>
        <position position="377"/>
    </location>
    <ligand>
        <name>substrate</name>
    </ligand>
</feature>
<feature type="modified residue" description="Phosphothreonine" evidence="7">
    <location>
        <position position="108"/>
    </location>
</feature>
<feature type="splice variant" id="VSP_018026" description="In isoform 3 and isoform 4." evidence="4 5">
    <location>
        <begin position="1"/>
        <end position="183"/>
    </location>
</feature>
<feature type="splice variant" id="VSP_018027" description="In isoform 4." evidence="4">
    <original>IQEKQRRQEEQRKRHL</original>
    <variation>VSMSRVIILVIASEPR</variation>
    <location>
        <begin position="343"/>
        <end position="358"/>
    </location>
</feature>
<feature type="splice variant" id="VSP_018028" description="In isoform 4." evidence="4">
    <location>
        <begin position="359"/>
        <end position="497"/>
    </location>
</feature>
<feature type="sequence conflict" description="In Ref. 2; BAE38495." evidence="6" ref="2">
    <original>P</original>
    <variation>Q</variation>
    <location>
        <position position="9"/>
    </location>
</feature>
<feature type="sequence conflict" description="In Ref. 2; BAE38495." evidence="6" ref="2">
    <original>S</original>
    <variation>P</variation>
    <location>
        <position position="86"/>
    </location>
</feature>
<feature type="sequence conflict" description="In Ref. 2; BAE38495." evidence="6" ref="2">
    <original>V</original>
    <variation>I</variation>
    <location>
        <position position="159"/>
    </location>
</feature>
<feature type="sequence conflict" description="In Ref. 2; BAE38495." evidence="6" ref="2">
    <original>S</original>
    <variation>N</variation>
    <location>
        <position position="283"/>
    </location>
</feature>
<feature type="sequence conflict" description="In Ref. 2; BAE39347." evidence="6" ref="2">
    <original>R</original>
    <variation>H</variation>
    <location>
        <position position="377"/>
    </location>
</feature>
<keyword id="KW-0025">Alternative splicing</keyword>
<keyword id="KW-0539">Nucleus</keyword>
<keyword id="KW-0597">Phosphoprotein</keyword>
<keyword id="KW-1185">Reference proteome</keyword>
<keyword id="KW-0819">tRNA processing</keyword>
<evidence type="ECO:0000250" key="1">
    <source>
        <dbReference type="UniProtKB" id="P41814"/>
    </source>
</evidence>
<evidence type="ECO:0000250" key="2">
    <source>
        <dbReference type="UniProtKB" id="Q9UJA5"/>
    </source>
</evidence>
<evidence type="ECO:0000256" key="3">
    <source>
        <dbReference type="SAM" id="MobiDB-lite"/>
    </source>
</evidence>
<evidence type="ECO:0000303" key="4">
    <source>
    </source>
</evidence>
<evidence type="ECO:0000303" key="5">
    <source>
    </source>
</evidence>
<evidence type="ECO:0000305" key="6"/>
<evidence type="ECO:0007744" key="7">
    <source>
    </source>
</evidence>
<accession>Q8CE96</accession>
<accession>Q3TJZ8</accession>
<accession>Q3TME7</accession>
<accession>Q6ZPW8</accession>
<accession>Q80Y59</accession>
<accession>Q8CEU0</accession>
<name>TRM6_MOUSE</name>
<sequence>MEASAAEQPSSPPPPLGDHCIHDGDFVVLKREDVFKAVQVQRRKKVTFEKQWFYLDNAIGHSYGSAFDVSSGGSLQLRKKLEEPASETKEAGTDNRNIVDDGKSQKLTQDDIKALKDKGIKGEEIVQQLIENSTTFRDKTEFAQDKYIKKKKKKYEAIVTILKPSTRILSIMYYAREPGKINHMRYDTLAQMLTLGNIRAGNKMIVMETCSGLVLGAMMERMGGFGSIIQLYPGDGPVRAATACFGFPKSFLSGLYEFPLNKVNSLLNGTFSAEMLSSEPKDSTPVEESNGELEEKEIAEQADEDNIVDAAENNSGEQRPMEIVPGDPENKEPKEKRSKRDYIQEKQRRQEEQRKRHLEAAALLGERNADGLIVASRFHPTPLLLSLLDFVAPSRPFVVYCQYKEPLLECYTKLRERGGVINLRLSETWLRNYQVLPDRSHPKLLMSGGGGYLLSGFTVVSDSLRADPSLKSCTGALDPHKAEEPAAKKQKCMESAS</sequence>